<sequence length="171" mass="18958">MRIAIGCDHIVTDEKMAVSEFLKSKGYEVIDFGTYDHTRTHYPIFGKKVGEAVTSGQADLGVCICGTGVGINNAVNKVPGVRSALVRDMTTALYAKEQLNANVIGFGGKITGELLMCDIIEAFIHAEYKPSEENKKLIAKIEHLESHNAQQTDANFFTEFLEKWDRGEYHD</sequence>
<proteinExistence type="inferred from homology"/>
<keyword id="KW-0413">Isomerase</keyword>
<keyword id="KW-0423">Lactose metabolism</keyword>
<comment type="catalytic activity">
    <reaction evidence="1">
        <text>aldehydo-D-galactose 6-phosphate = keto-D-tagatose 6-phosphate</text>
        <dbReference type="Rhea" id="RHEA:13033"/>
        <dbReference type="ChEBI" id="CHEBI:58255"/>
        <dbReference type="ChEBI" id="CHEBI:134283"/>
        <dbReference type="EC" id="5.3.1.26"/>
    </reaction>
</comment>
<comment type="pathway">
    <text evidence="1">Carbohydrate metabolism; D-galactose 6-phosphate degradation; D-tagatose 6-phosphate from D-galactose 6-phosphate: step 1/1.</text>
</comment>
<comment type="subunit">
    <text evidence="1">Heteromultimeric protein consisting of LacA and LacB.</text>
</comment>
<comment type="similarity">
    <text evidence="1">Belongs to the LacAB/RpiB family.</text>
</comment>
<name>LACB_STRPJ</name>
<feature type="chain" id="PRO_1000185404" description="Galactose-6-phosphate isomerase subunit LacB">
    <location>
        <begin position="1"/>
        <end position="171"/>
    </location>
</feature>
<gene>
    <name evidence="1" type="primary">lacB</name>
    <name type="ordered locus">SPN23F10910</name>
</gene>
<accession>B8ZQ65</accession>
<organism>
    <name type="scientific">Streptococcus pneumoniae (strain ATCC 700669 / Spain 23F-1)</name>
    <dbReference type="NCBI Taxonomy" id="561276"/>
    <lineage>
        <taxon>Bacteria</taxon>
        <taxon>Bacillati</taxon>
        <taxon>Bacillota</taxon>
        <taxon>Bacilli</taxon>
        <taxon>Lactobacillales</taxon>
        <taxon>Streptococcaceae</taxon>
        <taxon>Streptococcus</taxon>
    </lineage>
</organism>
<protein>
    <recommendedName>
        <fullName evidence="1">Galactose-6-phosphate isomerase subunit LacB</fullName>
        <ecNumber evidence="1">5.3.1.26</ecNumber>
    </recommendedName>
</protein>
<evidence type="ECO:0000255" key="1">
    <source>
        <dbReference type="HAMAP-Rule" id="MF_01556"/>
    </source>
</evidence>
<reference key="1">
    <citation type="journal article" date="2009" name="J. Bacteriol.">
        <title>Role of conjugative elements in the evolution of the multidrug-resistant pandemic clone Streptococcus pneumoniae Spain23F ST81.</title>
        <authorList>
            <person name="Croucher N.J."/>
            <person name="Walker D."/>
            <person name="Romero P."/>
            <person name="Lennard N."/>
            <person name="Paterson G.K."/>
            <person name="Bason N.C."/>
            <person name="Mitchell A.M."/>
            <person name="Quail M.A."/>
            <person name="Andrew P.W."/>
            <person name="Parkhill J."/>
            <person name="Bentley S.D."/>
            <person name="Mitchell T.J."/>
        </authorList>
    </citation>
    <scope>NUCLEOTIDE SEQUENCE [LARGE SCALE GENOMIC DNA]</scope>
    <source>
        <strain>ATCC 700669 / Spain 23F-1</strain>
    </source>
</reference>
<dbReference type="EC" id="5.3.1.26" evidence="1"/>
<dbReference type="EMBL" id="FM211187">
    <property type="protein sequence ID" value="CAR68904.1"/>
    <property type="molecule type" value="Genomic_DNA"/>
</dbReference>
<dbReference type="RefSeq" id="WP_001216910.1">
    <property type="nucleotide sequence ID" value="NC_011900.1"/>
</dbReference>
<dbReference type="SMR" id="B8ZQ65"/>
<dbReference type="KEGG" id="sne:SPN23F10910"/>
<dbReference type="HOGENOM" id="CLU_091396_2_0_9"/>
<dbReference type="UniPathway" id="UPA00702">
    <property type="reaction ID" value="UER00714"/>
</dbReference>
<dbReference type="GO" id="GO:0050044">
    <property type="term" value="F:galactose-6-phosphate isomerase activity"/>
    <property type="evidence" value="ECO:0007669"/>
    <property type="project" value="UniProtKB-UniRule"/>
</dbReference>
<dbReference type="GO" id="GO:0004751">
    <property type="term" value="F:ribose-5-phosphate isomerase activity"/>
    <property type="evidence" value="ECO:0007669"/>
    <property type="project" value="TreeGrafter"/>
</dbReference>
<dbReference type="GO" id="GO:0019316">
    <property type="term" value="P:D-allose catabolic process"/>
    <property type="evidence" value="ECO:0007669"/>
    <property type="project" value="TreeGrafter"/>
</dbReference>
<dbReference type="GO" id="GO:0019388">
    <property type="term" value="P:galactose catabolic process"/>
    <property type="evidence" value="ECO:0007669"/>
    <property type="project" value="UniProtKB-UniPathway"/>
</dbReference>
<dbReference type="GO" id="GO:0019512">
    <property type="term" value="P:lactose catabolic process via tagatose-6-phosphate"/>
    <property type="evidence" value="ECO:0007669"/>
    <property type="project" value="UniProtKB-UniRule"/>
</dbReference>
<dbReference type="GO" id="GO:0009052">
    <property type="term" value="P:pentose-phosphate shunt, non-oxidative branch"/>
    <property type="evidence" value="ECO:0007669"/>
    <property type="project" value="TreeGrafter"/>
</dbReference>
<dbReference type="Gene3D" id="3.40.1400.10">
    <property type="entry name" value="Sugar-phosphate isomerase, RpiB/LacA/LacB"/>
    <property type="match status" value="1"/>
</dbReference>
<dbReference type="HAMAP" id="MF_01556">
    <property type="entry name" value="LacB"/>
    <property type="match status" value="1"/>
</dbReference>
<dbReference type="InterPro" id="IPR004784">
    <property type="entry name" value="LacB"/>
</dbReference>
<dbReference type="InterPro" id="IPR003500">
    <property type="entry name" value="RpiB_LacA_LacB"/>
</dbReference>
<dbReference type="InterPro" id="IPR036569">
    <property type="entry name" value="RpiB_LacA_LacB_sf"/>
</dbReference>
<dbReference type="NCBIfam" id="TIGR01119">
    <property type="entry name" value="lacB"/>
    <property type="match status" value="1"/>
</dbReference>
<dbReference type="NCBIfam" id="NF004051">
    <property type="entry name" value="PRK05571.1"/>
    <property type="match status" value="1"/>
</dbReference>
<dbReference type="NCBIfam" id="NF006381">
    <property type="entry name" value="PRK08622.1"/>
    <property type="match status" value="1"/>
</dbReference>
<dbReference type="NCBIfam" id="NF009258">
    <property type="entry name" value="PRK12615.1"/>
    <property type="match status" value="1"/>
</dbReference>
<dbReference type="NCBIfam" id="TIGR00689">
    <property type="entry name" value="rpiB_lacA_lacB"/>
    <property type="match status" value="1"/>
</dbReference>
<dbReference type="PANTHER" id="PTHR30345:SF0">
    <property type="entry name" value="DNA DAMAGE-REPAIR_TOLERATION PROTEIN DRT102"/>
    <property type="match status" value="1"/>
</dbReference>
<dbReference type="PANTHER" id="PTHR30345">
    <property type="entry name" value="RIBOSE-5-PHOSPHATE ISOMERASE B"/>
    <property type="match status" value="1"/>
</dbReference>
<dbReference type="Pfam" id="PF02502">
    <property type="entry name" value="LacAB_rpiB"/>
    <property type="match status" value="1"/>
</dbReference>
<dbReference type="PIRSF" id="PIRSF005384">
    <property type="entry name" value="RpiB_LacA_B"/>
    <property type="match status" value="1"/>
</dbReference>
<dbReference type="SUPFAM" id="SSF89623">
    <property type="entry name" value="Ribose/Galactose isomerase RpiB/AlsB"/>
    <property type="match status" value="1"/>
</dbReference>